<sequence length="235" mass="24525">MVDPVEARDRLIVALDLPDVRAAEAMIARLDDSVTFYKIGYQLAYAGGLPLARALKAAGKKVFVDLKLHDIGNTVARGVESLASLGATFITVHAYPQTMKAAVEGRGASKVKILAVTVLTSYDEADLAQAGYRLGVRDLVELRARQAKELGIDGLVCSPEEAAHLRGIVGDGIKLVTPGIRPAGSAAGDQKRIMTPARAIAAGADYLVVGRPVTEAADPKAAADAIVDEIVGATT</sequence>
<keyword id="KW-0210">Decarboxylase</keyword>
<keyword id="KW-0456">Lyase</keyword>
<keyword id="KW-0665">Pyrimidine biosynthesis</keyword>
<protein>
    <recommendedName>
        <fullName evidence="1">Orotidine 5'-phosphate decarboxylase</fullName>
        <ecNumber evidence="1">4.1.1.23</ecNumber>
    </recommendedName>
    <alternativeName>
        <fullName evidence="1">OMP decarboxylase</fullName>
        <shortName evidence="1">OMPDCase</shortName>
        <shortName evidence="1">OMPdecase</shortName>
    </alternativeName>
</protein>
<feature type="chain" id="PRO_1000065938" description="Orotidine 5'-phosphate decarboxylase">
    <location>
        <begin position="1"/>
        <end position="235"/>
    </location>
</feature>
<feature type="active site" description="Proton donor" evidence="1">
    <location>
        <position position="67"/>
    </location>
</feature>
<feature type="binding site" evidence="1">
    <location>
        <position position="16"/>
    </location>
    <ligand>
        <name>substrate</name>
    </ligand>
</feature>
<feature type="binding site" evidence="1">
    <location>
        <position position="38"/>
    </location>
    <ligand>
        <name>substrate</name>
    </ligand>
</feature>
<feature type="binding site" evidence="1">
    <location>
        <begin position="65"/>
        <end position="74"/>
    </location>
    <ligand>
        <name>substrate</name>
    </ligand>
</feature>
<feature type="binding site" evidence="1">
    <location>
        <position position="120"/>
    </location>
    <ligand>
        <name>substrate</name>
    </ligand>
</feature>
<feature type="binding site" evidence="1">
    <location>
        <position position="181"/>
    </location>
    <ligand>
        <name>substrate</name>
    </ligand>
</feature>
<feature type="binding site" evidence="1">
    <location>
        <position position="190"/>
    </location>
    <ligand>
        <name>substrate</name>
    </ligand>
</feature>
<feature type="binding site" evidence="1">
    <location>
        <position position="210"/>
    </location>
    <ligand>
        <name>substrate</name>
    </ligand>
</feature>
<feature type="binding site" evidence="1">
    <location>
        <position position="211"/>
    </location>
    <ligand>
        <name>substrate</name>
    </ligand>
</feature>
<organism>
    <name type="scientific">Rhodopseudomonas palustris (strain BisA53)</name>
    <dbReference type="NCBI Taxonomy" id="316055"/>
    <lineage>
        <taxon>Bacteria</taxon>
        <taxon>Pseudomonadati</taxon>
        <taxon>Pseudomonadota</taxon>
        <taxon>Alphaproteobacteria</taxon>
        <taxon>Hyphomicrobiales</taxon>
        <taxon>Nitrobacteraceae</taxon>
        <taxon>Rhodopseudomonas</taxon>
    </lineage>
</organism>
<evidence type="ECO:0000255" key="1">
    <source>
        <dbReference type="HAMAP-Rule" id="MF_01200"/>
    </source>
</evidence>
<gene>
    <name evidence="1" type="primary">pyrF</name>
    <name type="ordered locus">RPE_0345</name>
</gene>
<accession>Q07UT0</accession>
<name>PYRF_RHOP5</name>
<proteinExistence type="inferred from homology"/>
<comment type="function">
    <text evidence="1">Catalyzes the decarboxylation of orotidine 5'-monophosphate (OMP) to uridine 5'-monophosphate (UMP).</text>
</comment>
<comment type="catalytic activity">
    <reaction evidence="1">
        <text>orotidine 5'-phosphate + H(+) = UMP + CO2</text>
        <dbReference type="Rhea" id="RHEA:11596"/>
        <dbReference type="ChEBI" id="CHEBI:15378"/>
        <dbReference type="ChEBI" id="CHEBI:16526"/>
        <dbReference type="ChEBI" id="CHEBI:57538"/>
        <dbReference type="ChEBI" id="CHEBI:57865"/>
        <dbReference type="EC" id="4.1.1.23"/>
    </reaction>
</comment>
<comment type="pathway">
    <text evidence="1">Pyrimidine metabolism; UMP biosynthesis via de novo pathway; UMP from orotate: step 2/2.</text>
</comment>
<comment type="subunit">
    <text evidence="1">Homodimer.</text>
</comment>
<comment type="similarity">
    <text evidence="1">Belongs to the OMP decarboxylase family. Type 1 subfamily.</text>
</comment>
<reference key="1">
    <citation type="submission" date="2006-09" db="EMBL/GenBank/DDBJ databases">
        <title>Complete sequence of Rhodopseudomonas palustris BisA53.</title>
        <authorList>
            <consortium name="US DOE Joint Genome Institute"/>
            <person name="Copeland A."/>
            <person name="Lucas S."/>
            <person name="Lapidus A."/>
            <person name="Barry K."/>
            <person name="Detter J.C."/>
            <person name="Glavina del Rio T."/>
            <person name="Hammon N."/>
            <person name="Israni S."/>
            <person name="Dalin E."/>
            <person name="Tice H."/>
            <person name="Pitluck S."/>
            <person name="Chain P."/>
            <person name="Malfatti S."/>
            <person name="Shin M."/>
            <person name="Vergez L."/>
            <person name="Schmutz J."/>
            <person name="Larimer F."/>
            <person name="Land M."/>
            <person name="Hauser L."/>
            <person name="Pelletier D.A."/>
            <person name="Kyrpides N."/>
            <person name="Kim E."/>
            <person name="Harwood C.S."/>
            <person name="Oda Y."/>
            <person name="Richardson P."/>
        </authorList>
    </citation>
    <scope>NUCLEOTIDE SEQUENCE [LARGE SCALE GENOMIC DNA]</scope>
    <source>
        <strain>BisA53</strain>
    </source>
</reference>
<dbReference type="EC" id="4.1.1.23" evidence="1"/>
<dbReference type="EMBL" id="CP000463">
    <property type="protein sequence ID" value="ABJ04304.1"/>
    <property type="molecule type" value="Genomic_DNA"/>
</dbReference>
<dbReference type="SMR" id="Q07UT0"/>
<dbReference type="STRING" id="316055.RPE_0345"/>
<dbReference type="KEGG" id="rpe:RPE_0345"/>
<dbReference type="eggNOG" id="COG0284">
    <property type="taxonomic scope" value="Bacteria"/>
</dbReference>
<dbReference type="HOGENOM" id="CLU_067069_1_0_5"/>
<dbReference type="OrthoDB" id="9806203at2"/>
<dbReference type="UniPathway" id="UPA00070">
    <property type="reaction ID" value="UER00120"/>
</dbReference>
<dbReference type="GO" id="GO:0005829">
    <property type="term" value="C:cytosol"/>
    <property type="evidence" value="ECO:0007669"/>
    <property type="project" value="TreeGrafter"/>
</dbReference>
<dbReference type="GO" id="GO:0004590">
    <property type="term" value="F:orotidine-5'-phosphate decarboxylase activity"/>
    <property type="evidence" value="ECO:0007669"/>
    <property type="project" value="UniProtKB-UniRule"/>
</dbReference>
<dbReference type="GO" id="GO:0006207">
    <property type="term" value="P:'de novo' pyrimidine nucleobase biosynthetic process"/>
    <property type="evidence" value="ECO:0007669"/>
    <property type="project" value="InterPro"/>
</dbReference>
<dbReference type="GO" id="GO:0044205">
    <property type="term" value="P:'de novo' UMP biosynthetic process"/>
    <property type="evidence" value="ECO:0007669"/>
    <property type="project" value="UniProtKB-UniRule"/>
</dbReference>
<dbReference type="CDD" id="cd04725">
    <property type="entry name" value="OMP_decarboxylase_like"/>
    <property type="match status" value="1"/>
</dbReference>
<dbReference type="FunFam" id="3.20.20.70:FF:000015">
    <property type="entry name" value="Orotidine 5'-phosphate decarboxylase"/>
    <property type="match status" value="1"/>
</dbReference>
<dbReference type="Gene3D" id="3.20.20.70">
    <property type="entry name" value="Aldolase class I"/>
    <property type="match status" value="1"/>
</dbReference>
<dbReference type="HAMAP" id="MF_01200_B">
    <property type="entry name" value="OMPdecase_type1_B"/>
    <property type="match status" value="1"/>
</dbReference>
<dbReference type="InterPro" id="IPR013785">
    <property type="entry name" value="Aldolase_TIM"/>
</dbReference>
<dbReference type="InterPro" id="IPR014732">
    <property type="entry name" value="OMPdecase"/>
</dbReference>
<dbReference type="InterPro" id="IPR018089">
    <property type="entry name" value="OMPdecase_AS"/>
</dbReference>
<dbReference type="InterPro" id="IPR047596">
    <property type="entry name" value="OMPdecase_bac"/>
</dbReference>
<dbReference type="InterPro" id="IPR001754">
    <property type="entry name" value="OMPdeCOase_dom"/>
</dbReference>
<dbReference type="InterPro" id="IPR011060">
    <property type="entry name" value="RibuloseP-bd_barrel"/>
</dbReference>
<dbReference type="NCBIfam" id="NF001273">
    <property type="entry name" value="PRK00230.1"/>
    <property type="match status" value="1"/>
</dbReference>
<dbReference type="NCBIfam" id="TIGR01740">
    <property type="entry name" value="pyrF"/>
    <property type="match status" value="1"/>
</dbReference>
<dbReference type="PANTHER" id="PTHR32119">
    <property type="entry name" value="OROTIDINE 5'-PHOSPHATE DECARBOXYLASE"/>
    <property type="match status" value="1"/>
</dbReference>
<dbReference type="PANTHER" id="PTHR32119:SF2">
    <property type="entry name" value="OROTIDINE 5'-PHOSPHATE DECARBOXYLASE"/>
    <property type="match status" value="1"/>
</dbReference>
<dbReference type="Pfam" id="PF00215">
    <property type="entry name" value="OMPdecase"/>
    <property type="match status" value="1"/>
</dbReference>
<dbReference type="SMART" id="SM00934">
    <property type="entry name" value="OMPdecase"/>
    <property type="match status" value="1"/>
</dbReference>
<dbReference type="SUPFAM" id="SSF51366">
    <property type="entry name" value="Ribulose-phoshate binding barrel"/>
    <property type="match status" value="1"/>
</dbReference>
<dbReference type="PROSITE" id="PS00156">
    <property type="entry name" value="OMPDECASE"/>
    <property type="match status" value="1"/>
</dbReference>